<sequence>MLGRALIRTFLSPTVPVAACTTQIAGVHHHKEAGDMKRFTGVTRSNKAKANRNTHVNEKLFRKMRGRKTLLVELPEDSARERESEMPPGEMRTELLKRGLNPYKEAQPRVWNEAQVTFQSIYGIADPYVPPETPASFTDVNNKFDEVKQRLQHKFYNWRMGTNRIRKKQGFEKFDVKTFCAKAEDIYERAHKAMEARDKKEMYRCITEYAFAKMWPDVENGSVRFELVSIVEPSRVVAVRCFDNPPKSGNDIAQITVRMHTRQKLALYDRFGGLILGSEDEEKDVVEYVVFENHIAVVDGEWRLHGKIYPKWIEPKQGTHITHQLTQKEAGVQVAKANALPLRTTEKLEEAKKEKEAANSS</sequence>
<accession>Q616T6</accession>
<accession>A8XLU4</accession>
<protein>
    <recommendedName>
        <fullName evidence="3">Large ribosomal subunit protein mL45</fullName>
    </recommendedName>
    <alternativeName>
        <fullName evidence="3">39S ribosomal protein L45, mitochondrial</fullName>
    </alternativeName>
</protein>
<evidence type="ECO:0000250" key="1"/>
<evidence type="ECO:0000255" key="2"/>
<evidence type="ECO:0000305" key="3"/>
<reference key="1">
    <citation type="journal article" date="2003" name="PLoS Biol.">
        <title>The genome sequence of Caenorhabditis briggsae: a platform for comparative genomics.</title>
        <authorList>
            <person name="Stein L.D."/>
            <person name="Bao Z."/>
            <person name="Blasiar D."/>
            <person name="Blumenthal T."/>
            <person name="Brent M.R."/>
            <person name="Chen N."/>
            <person name="Chinwalla A."/>
            <person name="Clarke L."/>
            <person name="Clee C."/>
            <person name="Coghlan A."/>
            <person name="Coulson A."/>
            <person name="D'Eustachio P."/>
            <person name="Fitch D.H.A."/>
            <person name="Fulton L.A."/>
            <person name="Fulton R.E."/>
            <person name="Griffiths-Jones S."/>
            <person name="Harris T.W."/>
            <person name="Hillier L.W."/>
            <person name="Kamath R."/>
            <person name="Kuwabara P.E."/>
            <person name="Mardis E.R."/>
            <person name="Marra M.A."/>
            <person name="Miner T.L."/>
            <person name="Minx P."/>
            <person name="Mullikin J.C."/>
            <person name="Plumb R.W."/>
            <person name="Rogers J."/>
            <person name="Schein J.E."/>
            <person name="Sohrmann M."/>
            <person name="Spieth J."/>
            <person name="Stajich J.E."/>
            <person name="Wei C."/>
            <person name="Willey D."/>
            <person name="Wilson R.K."/>
            <person name="Durbin R.M."/>
            <person name="Waterston R.H."/>
        </authorList>
    </citation>
    <scope>NUCLEOTIDE SEQUENCE [LARGE SCALE GENOMIC DNA]</scope>
    <source>
        <strain>AF16</strain>
    </source>
</reference>
<dbReference type="EMBL" id="HE601055">
    <property type="protein sequence ID" value="CAP33598.1"/>
    <property type="molecule type" value="Genomic_DNA"/>
</dbReference>
<dbReference type="SMR" id="Q616T6"/>
<dbReference type="FunCoup" id="Q616T6">
    <property type="interactions" value="2064"/>
</dbReference>
<dbReference type="STRING" id="6238.Q616T6"/>
<dbReference type="EnsemblMetazoa" id="CBG15146.1">
    <property type="protein sequence ID" value="CBG15146.1"/>
    <property type="gene ID" value="WBGene00035474"/>
</dbReference>
<dbReference type="KEGG" id="cbr:CBG_15146"/>
<dbReference type="CTD" id="8584869"/>
<dbReference type="WormBase" id="CBG15146">
    <property type="protein sequence ID" value="CBP18333"/>
    <property type="gene ID" value="WBGene00035474"/>
    <property type="gene designation" value="Cbr-mrpl-45"/>
</dbReference>
<dbReference type="eggNOG" id="KOG4599">
    <property type="taxonomic scope" value="Eukaryota"/>
</dbReference>
<dbReference type="HOGENOM" id="CLU_038409_1_0_1"/>
<dbReference type="InParanoid" id="Q616T6"/>
<dbReference type="OMA" id="HTHMAAK"/>
<dbReference type="Proteomes" id="UP000008549">
    <property type="component" value="Unassembled WGS sequence"/>
</dbReference>
<dbReference type="GO" id="GO:0005739">
    <property type="term" value="C:mitochondrion"/>
    <property type="evidence" value="ECO:0000318"/>
    <property type="project" value="GO_Central"/>
</dbReference>
<dbReference type="GO" id="GO:1990904">
    <property type="term" value="C:ribonucleoprotein complex"/>
    <property type="evidence" value="ECO:0007669"/>
    <property type="project" value="UniProtKB-KW"/>
</dbReference>
<dbReference type="GO" id="GO:0005840">
    <property type="term" value="C:ribosome"/>
    <property type="evidence" value="ECO:0007669"/>
    <property type="project" value="UniProtKB-KW"/>
</dbReference>
<dbReference type="FunFam" id="3.10.450.240:FF:000003">
    <property type="entry name" value="39S ribosomal protein L45, mitochondrial"/>
    <property type="match status" value="1"/>
</dbReference>
<dbReference type="Gene3D" id="3.10.450.240">
    <property type="match status" value="1"/>
</dbReference>
<dbReference type="InterPro" id="IPR051975">
    <property type="entry name" value="mtLSU_mL45"/>
</dbReference>
<dbReference type="InterPro" id="IPR032710">
    <property type="entry name" value="NTF2-like_dom_sf"/>
</dbReference>
<dbReference type="InterPro" id="IPR007379">
    <property type="entry name" value="Tim44-like_dom"/>
</dbReference>
<dbReference type="PANTHER" id="PTHR28554">
    <property type="entry name" value="39S RIBOSOMAL PROTEIN L45, MITOCHONDRIAL"/>
    <property type="match status" value="1"/>
</dbReference>
<dbReference type="PANTHER" id="PTHR28554:SF1">
    <property type="entry name" value="LARGE RIBOSOMAL SUBUNIT PROTEIN ML45"/>
    <property type="match status" value="1"/>
</dbReference>
<dbReference type="Pfam" id="PF04280">
    <property type="entry name" value="Tim44"/>
    <property type="match status" value="1"/>
</dbReference>
<dbReference type="SMART" id="SM00978">
    <property type="entry name" value="Tim44"/>
    <property type="match status" value="1"/>
</dbReference>
<dbReference type="SUPFAM" id="SSF54427">
    <property type="entry name" value="NTF2-like"/>
    <property type="match status" value="1"/>
</dbReference>
<proteinExistence type="inferred from homology"/>
<organism>
    <name type="scientific">Caenorhabditis briggsae</name>
    <dbReference type="NCBI Taxonomy" id="6238"/>
    <lineage>
        <taxon>Eukaryota</taxon>
        <taxon>Metazoa</taxon>
        <taxon>Ecdysozoa</taxon>
        <taxon>Nematoda</taxon>
        <taxon>Chromadorea</taxon>
        <taxon>Rhabditida</taxon>
        <taxon>Rhabditina</taxon>
        <taxon>Rhabditomorpha</taxon>
        <taxon>Rhabditoidea</taxon>
        <taxon>Rhabditidae</taxon>
        <taxon>Peloderinae</taxon>
        <taxon>Caenorhabditis</taxon>
    </lineage>
</organism>
<gene>
    <name type="primary">mrpl-45</name>
    <name type="ORF">CBG15146</name>
</gene>
<name>RM45_CAEBR</name>
<comment type="subcellular location">
    <subcellularLocation>
        <location evidence="1">Mitochondrion</location>
    </subcellularLocation>
</comment>
<comment type="similarity">
    <text evidence="3">Belongs to the mitochondrion-specific ribosomal protein mL45 family.</text>
</comment>
<keyword id="KW-0496">Mitochondrion</keyword>
<keyword id="KW-1185">Reference proteome</keyword>
<keyword id="KW-0687">Ribonucleoprotein</keyword>
<keyword id="KW-0689">Ribosomal protein</keyword>
<keyword id="KW-0809">Transit peptide</keyword>
<feature type="transit peptide" description="Mitochondrion" evidence="2">
    <location>
        <begin position="1"/>
        <end status="unknown"/>
    </location>
</feature>
<feature type="chain" id="PRO_0000045911" description="Large ribosomal subunit protein mL45">
    <location>
        <begin status="unknown"/>
        <end position="361"/>
    </location>
</feature>